<proteinExistence type="evidence at transcript level"/>
<reference key="1">
    <citation type="journal article" date="1997" name="Biochem. Biophys. Res. Commun.">
        <title>Molecular cloning and analysis of novel cDNAs specifically expressed in adult mouse testes.</title>
        <authorList>
            <person name="Chen L."/>
            <person name="Sato M."/>
            <person name="Inoko H."/>
            <person name="Kimura M."/>
        </authorList>
    </citation>
    <scope>NUCLEOTIDE SEQUENCE [MRNA] (ISOFORM 2)</scope>
    <scope>TISSUE SPECIFICITY</scope>
    <source>
        <strain>CD-1</strain>
        <tissue>Testis</tissue>
    </source>
</reference>
<reference key="2">
    <citation type="journal article" date="2005" name="Science">
        <title>The transcriptional landscape of the mammalian genome.</title>
        <authorList>
            <person name="Carninci P."/>
            <person name="Kasukawa T."/>
            <person name="Katayama S."/>
            <person name="Gough J."/>
            <person name="Frith M.C."/>
            <person name="Maeda N."/>
            <person name="Oyama R."/>
            <person name="Ravasi T."/>
            <person name="Lenhard B."/>
            <person name="Wells C."/>
            <person name="Kodzius R."/>
            <person name="Shimokawa K."/>
            <person name="Bajic V.B."/>
            <person name="Brenner S.E."/>
            <person name="Batalov S."/>
            <person name="Forrest A.R."/>
            <person name="Zavolan M."/>
            <person name="Davis M.J."/>
            <person name="Wilming L.G."/>
            <person name="Aidinis V."/>
            <person name="Allen J.E."/>
            <person name="Ambesi-Impiombato A."/>
            <person name="Apweiler R."/>
            <person name="Aturaliya R.N."/>
            <person name="Bailey T.L."/>
            <person name="Bansal M."/>
            <person name="Baxter L."/>
            <person name="Beisel K.W."/>
            <person name="Bersano T."/>
            <person name="Bono H."/>
            <person name="Chalk A.M."/>
            <person name="Chiu K.P."/>
            <person name="Choudhary V."/>
            <person name="Christoffels A."/>
            <person name="Clutterbuck D.R."/>
            <person name="Crowe M.L."/>
            <person name="Dalla E."/>
            <person name="Dalrymple B.P."/>
            <person name="de Bono B."/>
            <person name="Della Gatta G."/>
            <person name="di Bernardo D."/>
            <person name="Down T."/>
            <person name="Engstrom P."/>
            <person name="Fagiolini M."/>
            <person name="Faulkner G."/>
            <person name="Fletcher C.F."/>
            <person name="Fukushima T."/>
            <person name="Furuno M."/>
            <person name="Futaki S."/>
            <person name="Gariboldi M."/>
            <person name="Georgii-Hemming P."/>
            <person name="Gingeras T.R."/>
            <person name="Gojobori T."/>
            <person name="Green R.E."/>
            <person name="Gustincich S."/>
            <person name="Harbers M."/>
            <person name="Hayashi Y."/>
            <person name="Hensch T.K."/>
            <person name="Hirokawa N."/>
            <person name="Hill D."/>
            <person name="Huminiecki L."/>
            <person name="Iacono M."/>
            <person name="Ikeo K."/>
            <person name="Iwama A."/>
            <person name="Ishikawa T."/>
            <person name="Jakt M."/>
            <person name="Kanapin A."/>
            <person name="Katoh M."/>
            <person name="Kawasawa Y."/>
            <person name="Kelso J."/>
            <person name="Kitamura H."/>
            <person name="Kitano H."/>
            <person name="Kollias G."/>
            <person name="Krishnan S.P."/>
            <person name="Kruger A."/>
            <person name="Kummerfeld S.K."/>
            <person name="Kurochkin I.V."/>
            <person name="Lareau L.F."/>
            <person name="Lazarevic D."/>
            <person name="Lipovich L."/>
            <person name="Liu J."/>
            <person name="Liuni S."/>
            <person name="McWilliam S."/>
            <person name="Madan Babu M."/>
            <person name="Madera M."/>
            <person name="Marchionni L."/>
            <person name="Matsuda H."/>
            <person name="Matsuzawa S."/>
            <person name="Miki H."/>
            <person name="Mignone F."/>
            <person name="Miyake S."/>
            <person name="Morris K."/>
            <person name="Mottagui-Tabar S."/>
            <person name="Mulder N."/>
            <person name="Nakano N."/>
            <person name="Nakauchi H."/>
            <person name="Ng P."/>
            <person name="Nilsson R."/>
            <person name="Nishiguchi S."/>
            <person name="Nishikawa S."/>
            <person name="Nori F."/>
            <person name="Ohara O."/>
            <person name="Okazaki Y."/>
            <person name="Orlando V."/>
            <person name="Pang K.C."/>
            <person name="Pavan W.J."/>
            <person name="Pavesi G."/>
            <person name="Pesole G."/>
            <person name="Petrovsky N."/>
            <person name="Piazza S."/>
            <person name="Reed J."/>
            <person name="Reid J.F."/>
            <person name="Ring B.Z."/>
            <person name="Ringwald M."/>
            <person name="Rost B."/>
            <person name="Ruan Y."/>
            <person name="Salzberg S.L."/>
            <person name="Sandelin A."/>
            <person name="Schneider C."/>
            <person name="Schoenbach C."/>
            <person name="Sekiguchi K."/>
            <person name="Semple C.A."/>
            <person name="Seno S."/>
            <person name="Sessa L."/>
            <person name="Sheng Y."/>
            <person name="Shibata Y."/>
            <person name="Shimada H."/>
            <person name="Shimada K."/>
            <person name="Silva D."/>
            <person name="Sinclair B."/>
            <person name="Sperling S."/>
            <person name="Stupka E."/>
            <person name="Sugiura K."/>
            <person name="Sultana R."/>
            <person name="Takenaka Y."/>
            <person name="Taki K."/>
            <person name="Tammoja K."/>
            <person name="Tan S.L."/>
            <person name="Tang S."/>
            <person name="Taylor M.S."/>
            <person name="Tegner J."/>
            <person name="Teichmann S.A."/>
            <person name="Ueda H.R."/>
            <person name="van Nimwegen E."/>
            <person name="Verardo R."/>
            <person name="Wei C.L."/>
            <person name="Yagi K."/>
            <person name="Yamanishi H."/>
            <person name="Zabarovsky E."/>
            <person name="Zhu S."/>
            <person name="Zimmer A."/>
            <person name="Hide W."/>
            <person name="Bult C."/>
            <person name="Grimmond S.M."/>
            <person name="Teasdale R.D."/>
            <person name="Liu E.T."/>
            <person name="Brusic V."/>
            <person name="Quackenbush J."/>
            <person name="Wahlestedt C."/>
            <person name="Mattick J.S."/>
            <person name="Hume D.A."/>
            <person name="Kai C."/>
            <person name="Sasaki D."/>
            <person name="Tomaru Y."/>
            <person name="Fukuda S."/>
            <person name="Kanamori-Katayama M."/>
            <person name="Suzuki M."/>
            <person name="Aoki J."/>
            <person name="Arakawa T."/>
            <person name="Iida J."/>
            <person name="Imamura K."/>
            <person name="Itoh M."/>
            <person name="Kato T."/>
            <person name="Kawaji H."/>
            <person name="Kawagashira N."/>
            <person name="Kawashima T."/>
            <person name="Kojima M."/>
            <person name="Kondo S."/>
            <person name="Konno H."/>
            <person name="Nakano K."/>
            <person name="Ninomiya N."/>
            <person name="Nishio T."/>
            <person name="Okada M."/>
            <person name="Plessy C."/>
            <person name="Shibata K."/>
            <person name="Shiraki T."/>
            <person name="Suzuki S."/>
            <person name="Tagami M."/>
            <person name="Waki K."/>
            <person name="Watahiki A."/>
            <person name="Okamura-Oho Y."/>
            <person name="Suzuki H."/>
            <person name="Kawai J."/>
            <person name="Hayashizaki Y."/>
        </authorList>
    </citation>
    <scope>NUCLEOTIDE SEQUENCE [LARGE SCALE MRNA] (ISOFORM 1)</scope>
    <source>
        <strain>C57BL/6J</strain>
        <tissue>Small intestine</tissue>
    </source>
</reference>
<reference key="3">
    <citation type="journal article" date="2004" name="Genome Res.">
        <title>The status, quality, and expansion of the NIH full-length cDNA project: the Mammalian Gene Collection (MGC).</title>
        <authorList>
            <consortium name="The MGC Project Team"/>
        </authorList>
    </citation>
    <scope>NUCLEOTIDE SEQUENCE [LARGE SCALE MRNA] (ISOFORM 1)</scope>
    <source>
        <tissue>Brain</tissue>
    </source>
</reference>
<organism>
    <name type="scientific">Mus musculus</name>
    <name type="common">Mouse</name>
    <dbReference type="NCBI Taxonomy" id="10090"/>
    <lineage>
        <taxon>Eukaryota</taxon>
        <taxon>Metazoa</taxon>
        <taxon>Chordata</taxon>
        <taxon>Craniata</taxon>
        <taxon>Vertebrata</taxon>
        <taxon>Euteleostomi</taxon>
        <taxon>Mammalia</taxon>
        <taxon>Eutheria</taxon>
        <taxon>Euarchontoglires</taxon>
        <taxon>Glires</taxon>
        <taxon>Rodentia</taxon>
        <taxon>Myomorpha</taxon>
        <taxon>Muroidea</taxon>
        <taxon>Muridae</taxon>
        <taxon>Murinae</taxon>
        <taxon>Mus</taxon>
        <taxon>Mus</taxon>
    </lineage>
</organism>
<evidence type="ECO:0000250" key="1">
    <source>
        <dbReference type="UniProtKB" id="Q8N6V9"/>
    </source>
</evidence>
<evidence type="ECO:0000255" key="2"/>
<evidence type="ECO:0000256" key="3">
    <source>
        <dbReference type="SAM" id="MobiDB-lite"/>
    </source>
</evidence>
<evidence type="ECO:0000269" key="4">
    <source>
    </source>
</evidence>
<evidence type="ECO:0000303" key="5">
    <source>
    </source>
</evidence>
<protein>
    <recommendedName>
        <fullName>Testis-expressed protein 9</fullName>
    </recommendedName>
    <alternativeName>
        <fullName>Testis-specifically expressed protein 1</fullName>
        <shortName>Tsec-1</shortName>
    </alternativeName>
</protein>
<feature type="chain" id="PRO_0000244482" description="Testis-expressed protein 9">
    <location>
        <begin position="1"/>
        <end position="387"/>
    </location>
</feature>
<feature type="region of interest" description="Disordered" evidence="3">
    <location>
        <begin position="1"/>
        <end position="25"/>
    </location>
</feature>
<feature type="region of interest" description="Disordered" evidence="3">
    <location>
        <begin position="58"/>
        <end position="133"/>
    </location>
</feature>
<feature type="coiled-coil region" evidence="2">
    <location>
        <begin position="184"/>
        <end position="347"/>
    </location>
</feature>
<feature type="compositionally biased region" description="Polar residues" evidence="3">
    <location>
        <begin position="70"/>
        <end position="91"/>
    </location>
</feature>
<feature type="compositionally biased region" description="Polar residues" evidence="3">
    <location>
        <begin position="103"/>
        <end position="115"/>
    </location>
</feature>
<feature type="splice variant" id="VSP_019570" description="In isoform 2." evidence="5">
    <original>M</original>
    <variation>MYGHHGNRIAPGLVKM</variation>
    <location>
        <position position="1"/>
    </location>
</feature>
<feature type="splice variant" id="VSP_019571" description="In isoform 2." evidence="5">
    <original>ITNEDHQKIEVLKSE</original>
    <variation>NQYLNNDLERRASN</variation>
    <location>
        <begin position="319"/>
        <end position="333"/>
    </location>
</feature>
<feature type="splice variant" id="VSP_019572" description="In isoform 2." evidence="5">
    <location>
        <begin position="334"/>
        <end position="387"/>
    </location>
</feature>
<name>TEX9_MOUSE</name>
<dbReference type="EMBL" id="AB000619">
    <property type="protein sequence ID" value="BAA24108.1"/>
    <property type="molecule type" value="mRNA"/>
</dbReference>
<dbReference type="EMBL" id="AK008505">
    <property type="protein sequence ID" value="BAB25705.1"/>
    <property type="molecule type" value="mRNA"/>
</dbReference>
<dbReference type="EMBL" id="BC141033">
    <property type="protein sequence ID" value="AAI41034.1"/>
    <property type="molecule type" value="mRNA"/>
</dbReference>
<dbReference type="CCDS" id="CCDS40685.1">
    <molecule id="Q9D845-1"/>
</dbReference>
<dbReference type="PIR" id="JC5788">
    <property type="entry name" value="JC5788"/>
</dbReference>
<dbReference type="RefSeq" id="NP_033385.2">
    <molecule id="Q9D845-1"/>
    <property type="nucleotide sequence ID" value="NM_009359.4"/>
</dbReference>
<dbReference type="RefSeq" id="XP_006511083.1">
    <property type="nucleotide sequence ID" value="XM_006511020.3"/>
</dbReference>
<dbReference type="SMR" id="Q9D845"/>
<dbReference type="FunCoup" id="Q9D845">
    <property type="interactions" value="85"/>
</dbReference>
<dbReference type="STRING" id="10090.ENSMUSP00000139026"/>
<dbReference type="PhosphoSitePlus" id="Q9D845"/>
<dbReference type="PaxDb" id="10090-ENSMUSP00000139026"/>
<dbReference type="ProteomicsDB" id="259008">
    <molecule id="Q9D845-1"/>
</dbReference>
<dbReference type="ProteomicsDB" id="259009">
    <molecule id="Q9D845-2"/>
</dbReference>
<dbReference type="Antibodypedia" id="42704">
    <property type="antibodies" value="88 antibodies from 18 providers"/>
</dbReference>
<dbReference type="Ensembl" id="ENSMUST00000184125.8">
    <molecule id="Q9D845-1"/>
    <property type="protein sequence ID" value="ENSMUSP00000139026.2"/>
    <property type="gene ID" value="ENSMUSG00000090626.10"/>
</dbReference>
<dbReference type="GeneID" id="21778"/>
<dbReference type="KEGG" id="mmu:21778"/>
<dbReference type="UCSC" id="uc009qqa.2">
    <molecule id="Q9D845-1"/>
    <property type="organism name" value="mouse"/>
</dbReference>
<dbReference type="AGR" id="MGI:1201610"/>
<dbReference type="CTD" id="374618"/>
<dbReference type="MGI" id="MGI:1201610">
    <property type="gene designation" value="Tex9"/>
</dbReference>
<dbReference type="VEuPathDB" id="HostDB:ENSMUSG00000090626"/>
<dbReference type="eggNOG" id="ENOG502QPKV">
    <property type="taxonomic scope" value="Eukaryota"/>
</dbReference>
<dbReference type="GeneTree" id="ENSGT00390000018333"/>
<dbReference type="HOGENOM" id="CLU_059201_0_0_1"/>
<dbReference type="InParanoid" id="Q9D845"/>
<dbReference type="OMA" id="QISCEYY"/>
<dbReference type="OrthoDB" id="269872at2759"/>
<dbReference type="PhylomeDB" id="Q9D845"/>
<dbReference type="TreeFam" id="TF327209"/>
<dbReference type="BioGRID-ORCS" id="21778">
    <property type="hits" value="1 hit in 76 CRISPR screens"/>
</dbReference>
<dbReference type="ChiTaRS" id="Tex9">
    <property type="organism name" value="mouse"/>
</dbReference>
<dbReference type="PRO" id="PR:Q9D845"/>
<dbReference type="Proteomes" id="UP000000589">
    <property type="component" value="Chromosome 9"/>
</dbReference>
<dbReference type="RNAct" id="Q9D845">
    <property type="molecule type" value="protein"/>
</dbReference>
<dbReference type="Bgee" id="ENSMUSG00000090626">
    <property type="expression patterns" value="Expressed in undifferentiated genital tubercle and 215 other cell types or tissues"/>
</dbReference>
<dbReference type="ExpressionAtlas" id="Q9D845">
    <property type="expression patterns" value="baseline and differential"/>
</dbReference>
<dbReference type="GO" id="GO:0034451">
    <property type="term" value="C:centriolar satellite"/>
    <property type="evidence" value="ECO:0000250"/>
    <property type="project" value="UniProtKB"/>
</dbReference>
<dbReference type="GO" id="GO:0005737">
    <property type="term" value="C:cytoplasm"/>
    <property type="evidence" value="ECO:0007669"/>
    <property type="project" value="UniProtKB-KW"/>
</dbReference>
<dbReference type="Gene3D" id="1.10.287.1490">
    <property type="match status" value="1"/>
</dbReference>
<dbReference type="PANTHER" id="PTHR23313:SF0">
    <property type="entry name" value="TESTIS-EXPRESSED PROTEIN 9"/>
    <property type="match status" value="1"/>
</dbReference>
<dbReference type="PANTHER" id="PTHR23313">
    <property type="entry name" value="TSEC1-RELATED"/>
    <property type="match status" value="1"/>
</dbReference>
<dbReference type="SUPFAM" id="SSF57997">
    <property type="entry name" value="Tropomyosin"/>
    <property type="match status" value="1"/>
</dbReference>
<comment type="subcellular location">
    <subcellularLocation>
        <location evidence="1">Cytoplasm</location>
        <location evidence="1">Cytoskeleton</location>
        <location evidence="1">Microtubule organizing center</location>
        <location evidence="1">Centrosome</location>
        <location evidence="1">Centriolar satellite</location>
    </subcellularLocation>
</comment>
<comment type="alternative products">
    <event type="alternative splicing"/>
    <isoform>
        <id>Q9D845-1</id>
        <name>1</name>
        <sequence type="displayed"/>
    </isoform>
    <isoform>
        <id>Q9D845-2</id>
        <name>2</name>
        <sequence type="described" ref="VSP_019570 VSP_019571 VSP_019572"/>
    </isoform>
</comment>
<comment type="tissue specificity">
    <text evidence="4">Testis-specific.</text>
</comment>
<gene>
    <name type="primary">Tex9</name>
</gene>
<keyword id="KW-0025">Alternative splicing</keyword>
<keyword id="KW-0175">Coiled coil</keyword>
<keyword id="KW-0963">Cytoplasm</keyword>
<keyword id="KW-0206">Cytoskeleton</keyword>
<keyword id="KW-1185">Reference proteome</keyword>
<accession>Q9D845</accession>
<accession>B2RUA2</accession>
<accession>O54764</accession>
<sequence>MAGRSVRVPRRGSAGTQSRGQLAAGRDLLAREQEYKRLNEELEAKTADLVRQAEEVIREQQEVRARPFSALTTSCKEEGGSSSRDLLSSEGTHPWTETKPKTKNTGPVNKIQNRLHSADKERKTNSSAKLKYPDAQTANDVAIPDDFSDFSLAKTISRIEGQLDEDGLPECAEDDSFCGVSKDIGTEAQIRFLKAKLHVMQEELDSVVCECSKKEDKIQDLKSKVKNLEEDCVRQQRTVTSQQSQIEKYKNLFEEANKKCDELQQQLSSVERELESKRRLQKQAASSQSATEVRLNRALEEAEKYKVELSKLRQTNKDITNEDHQKIEVLKSENKKLERQKGELMIGFKKQLKLIDILKRQKMHIEAAKMLSFSEEEFMKALEWGSS</sequence>